<feature type="chain" id="PRO_0000119131" description="Kelch domain-containing protein 8B">
    <location>
        <begin position="1"/>
        <end position="354"/>
    </location>
</feature>
<feature type="repeat" description="Kelch 1">
    <location>
        <begin position="1"/>
        <end position="31"/>
    </location>
</feature>
<feature type="repeat" description="Kelch 2">
    <location>
        <begin position="32"/>
        <end position="79"/>
    </location>
</feature>
<feature type="repeat" description="Kelch 3">
    <location>
        <begin position="81"/>
        <end position="127"/>
    </location>
</feature>
<feature type="repeat" description="Kelch 4">
    <location>
        <begin position="128"/>
        <end position="175"/>
    </location>
</feature>
<feature type="repeat" description="Kelch 5">
    <location>
        <begin position="176"/>
        <end position="222"/>
    </location>
</feature>
<feature type="repeat" description="Kelch 6">
    <location>
        <begin position="224"/>
        <end position="281"/>
    </location>
</feature>
<feature type="repeat" description="Kelch 7">
    <location>
        <begin position="282"/>
        <end position="329"/>
    </location>
</feature>
<feature type="repeat" description="Kelch 8">
    <location>
        <begin position="331"/>
        <end position="354"/>
    </location>
</feature>
<organism>
    <name type="scientific">Homo sapiens</name>
    <name type="common">Human</name>
    <dbReference type="NCBI Taxonomy" id="9606"/>
    <lineage>
        <taxon>Eukaryota</taxon>
        <taxon>Metazoa</taxon>
        <taxon>Chordata</taxon>
        <taxon>Craniata</taxon>
        <taxon>Vertebrata</taxon>
        <taxon>Euteleostomi</taxon>
        <taxon>Mammalia</taxon>
        <taxon>Eutheria</taxon>
        <taxon>Euarchontoglires</taxon>
        <taxon>Primates</taxon>
        <taxon>Haplorrhini</taxon>
        <taxon>Catarrhini</taxon>
        <taxon>Hominidae</taxon>
        <taxon>Homo</taxon>
    </lineage>
</organism>
<gene>
    <name evidence="5" type="primary">KLHDC8B</name>
    <name type="ORF">FP17659</name>
</gene>
<accession>Q8IXV7</accession>
<proteinExistence type="evidence at protein level"/>
<keyword id="KW-0131">Cell cycle</keyword>
<keyword id="KW-0132">Cell division</keyword>
<keyword id="KW-0160">Chromosomal rearrangement</keyword>
<keyword id="KW-0963">Cytoplasm</keyword>
<keyword id="KW-0880">Kelch repeat</keyword>
<keyword id="KW-1267">Proteomics identification</keyword>
<keyword id="KW-1185">Reference proteome</keyword>
<keyword id="KW-0677">Repeat</keyword>
<reference key="1">
    <citation type="journal article" date="2004" name="Proc. Natl. Acad. Sci. U.S.A.">
        <title>Large-scale cDNA transfection screening for genes related to cancer development and progression.</title>
        <authorList>
            <person name="Wan D."/>
            <person name="Gong Y."/>
            <person name="Qin W."/>
            <person name="Zhang P."/>
            <person name="Li J."/>
            <person name="Wei L."/>
            <person name="Zhou X."/>
            <person name="Li H."/>
            <person name="Qiu X."/>
            <person name="Zhong F."/>
            <person name="He L."/>
            <person name="Yu J."/>
            <person name="Yao G."/>
            <person name="Jiang H."/>
            <person name="Qian L."/>
            <person name="Yu Y."/>
            <person name="Shu H."/>
            <person name="Chen X."/>
            <person name="Xu H."/>
            <person name="Guo M."/>
            <person name="Pan Z."/>
            <person name="Chen Y."/>
            <person name="Ge C."/>
            <person name="Yang S."/>
            <person name="Gu J."/>
        </authorList>
    </citation>
    <scope>NUCLEOTIDE SEQUENCE [LARGE SCALE MRNA]</scope>
</reference>
<reference key="2">
    <citation type="journal article" date="2004" name="Genome Res.">
        <title>The status, quality, and expansion of the NIH full-length cDNA project: the Mammalian Gene Collection (MGC).</title>
        <authorList>
            <consortium name="The MGC Project Team"/>
        </authorList>
    </citation>
    <scope>NUCLEOTIDE SEQUENCE [LARGE SCALE MRNA]</scope>
    <source>
        <tissue>Brain</tissue>
    </source>
</reference>
<reference key="3">
    <citation type="journal article" date="2009" name="Proc. Natl. Acad. Sci. U.S.A.">
        <title>Mutations in a gene encoding a midbody kelch protein in familial and sporadic classical Hodgkin lymphoma lead to binucleated cells.</title>
        <authorList>
            <person name="Salipante S.J."/>
            <person name="Mealiffe M.E."/>
            <person name="Wechsler J."/>
            <person name="Krem M.M."/>
            <person name="Liu Y."/>
            <person name="Namkoong S."/>
            <person name="Bhagat G."/>
            <person name="Kirchhoff T."/>
            <person name="Offit K."/>
            <person name="Lynch H."/>
            <person name="Wiernik P.H."/>
            <person name="Roshal M."/>
            <person name="McMaster M.L."/>
            <person name="Tucker M."/>
            <person name="Fromm J.R."/>
            <person name="Goldin L.R."/>
            <person name="Horwitz M.S."/>
        </authorList>
    </citation>
    <scope>SUBCELLULAR LOCATION</scope>
    <scope>DEVELOPMENTAL STAGE</scope>
    <scope>CHROMOSOMAL TRANSLOCATION</scope>
    <scope>INVOLVEMENT IN CHL</scope>
</reference>
<reference key="4">
    <citation type="journal article" date="2010" name="Cell Cycle">
        <title>Mutations in a gene encoding a midbody protein in binucleated Reed-Sternberg cells of Hodgkin lymphoma.</title>
        <authorList>
            <person name="Krem M.M."/>
            <person name="Salipante S.J."/>
            <person name="Horwitz M.S."/>
        </authorList>
    </citation>
    <scope>FUNCTION</scope>
    <scope>SUBCELLULAR LOCATION</scope>
    <scope>3D-STRUCTURE MODELING</scope>
</reference>
<reference key="5">
    <citation type="journal article" date="2012" name="J. Biol. Chem.">
        <title>The kelch protein KLHDC8B guards against mitotic errors, centrosomal amplification, and chromosomal instability.</title>
        <authorList>
            <person name="Krem M.M."/>
            <person name="Luo P."/>
            <person name="Ing B.I."/>
            <person name="Horwitz M.S."/>
        </authorList>
    </citation>
    <scope>FUNCTION</scope>
</reference>
<reference key="6">
    <citation type="journal article" date="2013" name="Commun. Integr. Biol.">
        <title>Mitotic errors, aneuploidy and micronuclei in Hodgkin lymphoma pathogenesis.</title>
        <authorList>
            <person name="Krem M.M."/>
            <person name="Horwitz M.S."/>
        </authorList>
    </citation>
    <scope>FUNCTION</scope>
</reference>
<name>KLD8B_HUMAN</name>
<sequence>MSAGGGRAFAWQVFPPMPTCRVYGTVAHQDGHLLVLGGCGRAGLPLDTAETLDMASHTWLALAPLPTARAGAAAVVLGKQVLVVGGVDEVQSPVAAVEAFLMDEGRWERRATLPQAAMGVATVERDGMVYALGGMGPDTAPQAQVRVYEPRRDCWLSLPSMPTPCYGASTFLHGNKIYVLGGRQGKLPVTAFEAFDLEARTWTRHPSLPSRRAFAGCAMAEGSVFSLGGLQQPGPHNFYSRPHFVNTVEMFDLEHGSWTKLPRSLRMRDKRADFVVGSLGGHIVAIGGLGNQPCPLGSVESFSLARRRWEALPAMPTARCSCSSLQAGPRLFVIGGVAQGPSQAVEALCLRDGV</sequence>
<comment type="function">
    <text evidence="2 3 4">Involved in pinching off the separated nuclei at the cleavage furrow and in cytokinesis (PubMed:20107318). Required for mitotic integrity and maintenance of chromosomal stability. Protects cells against mitotic errors, centrosomal amplification, micronucleus formation and aneuploidy. Plays a key role of midbody function involving abscission of the daughter cells during cytokinesis and appropriate chromosomal and nuclear segregation into the daughter cells (PubMed:22988245, PubMed:23713010).</text>
</comment>
<comment type="subcellular location">
    <subcellularLocation>
        <location evidence="1 2">Cytoplasm</location>
    </subcellularLocation>
    <subcellularLocation>
        <location evidence="1 2">Midbody</location>
    </subcellularLocation>
    <text evidence="1 2">In mitotic cells, concentrates in the midbody of the cytoplasmic bridge linking daughter cells as they are about to separate during cytokinesis.</text>
</comment>
<comment type="developmental stage">
    <text evidence="1">Transcribed predominantly during S phase, translated exclusively during mitosis and cytokinesis and rapidly degraded after cell division.</text>
</comment>
<comment type="disease" evidence="1">
    <disease id="DI-02721">
        <name>Lymphoma, Hodgkin, classic</name>
        <acronym>CHL</acronym>
        <description>A malignant disease characterized by progressive enlargement of the lymph nodes, spleen and general lymphoid tissue, and the presence of large, usually multinucleate, cells (Reed-Sternberg cells). Reed-Sternberg cells compose only 1-2% of the total tumor cell mass. The remainder is composed of a variety of reactive, mixed inflammatory cells consisting of lymphocytes, plasma cells, neutrophils, eosinophils and histiocytes.</description>
        <dbReference type="MIM" id="236000"/>
    </disease>
    <text evidence="1">Disease susceptibility is associated with variants affecting the gene represented in this entry. A variant in the 5'-UTR of KLHDC8B, responsible for decreasing its expression, is associated with classic Hodgkin lymphoma and segregates with the disease in some families (PubMed:19706467).</text>
</comment>
<comment type="disease">
    <text>A chromosomal aberration disrupting KLHDC8B has been found in a family with the nodular sclerosis type of Hodgkin lymphoma. Translocation t(2,3)(q11.2;p21.31).</text>
</comment>
<evidence type="ECO:0000269" key="1">
    <source>
    </source>
</evidence>
<evidence type="ECO:0000269" key="2">
    <source>
    </source>
</evidence>
<evidence type="ECO:0000269" key="3">
    <source>
    </source>
</evidence>
<evidence type="ECO:0000269" key="4">
    <source>
    </source>
</evidence>
<evidence type="ECO:0000303" key="5">
    <source>
    </source>
</evidence>
<dbReference type="EMBL" id="AY129011">
    <property type="protein sequence ID" value="AAM98754.1"/>
    <property type="molecule type" value="mRNA"/>
</dbReference>
<dbReference type="EMBL" id="BC039083">
    <property type="protein sequence ID" value="AAH39083.1"/>
    <property type="molecule type" value="mRNA"/>
</dbReference>
<dbReference type="CCDS" id="CCDS2791.1"/>
<dbReference type="RefSeq" id="NP_775817.1">
    <property type="nucleotide sequence ID" value="NM_173546.3"/>
</dbReference>
<dbReference type="RefSeq" id="XP_054201608.1">
    <property type="nucleotide sequence ID" value="XM_054345633.1"/>
</dbReference>
<dbReference type="RefSeq" id="XP_054201609.1">
    <property type="nucleotide sequence ID" value="XM_054345634.1"/>
</dbReference>
<dbReference type="RefSeq" id="XP_054201610.1">
    <property type="nucleotide sequence ID" value="XM_054345635.1"/>
</dbReference>
<dbReference type="SMR" id="Q8IXV7"/>
<dbReference type="BioGRID" id="128359">
    <property type="interactions" value="8"/>
</dbReference>
<dbReference type="FunCoup" id="Q8IXV7">
    <property type="interactions" value="127"/>
</dbReference>
<dbReference type="IntAct" id="Q8IXV7">
    <property type="interactions" value="9"/>
</dbReference>
<dbReference type="MINT" id="Q8IXV7"/>
<dbReference type="STRING" id="9606.ENSP00000327468"/>
<dbReference type="GlyGen" id="Q8IXV7">
    <property type="glycosylation" value="2 sites, 1 O-linked glycan (1 site)"/>
</dbReference>
<dbReference type="iPTMnet" id="Q8IXV7"/>
<dbReference type="PhosphoSitePlus" id="Q8IXV7"/>
<dbReference type="BioMuta" id="KLHDC8B"/>
<dbReference type="DMDM" id="74728248"/>
<dbReference type="jPOST" id="Q8IXV7"/>
<dbReference type="MassIVE" id="Q8IXV7"/>
<dbReference type="PaxDb" id="9606-ENSP00000327468"/>
<dbReference type="PeptideAtlas" id="Q8IXV7"/>
<dbReference type="ProteomicsDB" id="71068"/>
<dbReference type="Pumba" id="Q8IXV7"/>
<dbReference type="Antibodypedia" id="2038">
    <property type="antibodies" value="144 antibodies from 23 providers"/>
</dbReference>
<dbReference type="DNASU" id="200942"/>
<dbReference type="Ensembl" id="ENST00000332780.4">
    <property type="protein sequence ID" value="ENSP00000327468.2"/>
    <property type="gene ID" value="ENSG00000185909.15"/>
</dbReference>
<dbReference type="GeneID" id="200942"/>
<dbReference type="KEGG" id="hsa:200942"/>
<dbReference type="MANE-Select" id="ENST00000332780.4">
    <property type="protein sequence ID" value="ENSP00000327468.2"/>
    <property type="RefSeq nucleotide sequence ID" value="NM_173546.3"/>
    <property type="RefSeq protein sequence ID" value="NP_775817.1"/>
</dbReference>
<dbReference type="UCSC" id="uc003cwh.4">
    <property type="organism name" value="human"/>
</dbReference>
<dbReference type="AGR" id="HGNC:28557"/>
<dbReference type="CTD" id="200942"/>
<dbReference type="DisGeNET" id="200942"/>
<dbReference type="GeneCards" id="KLHDC8B"/>
<dbReference type="HGNC" id="HGNC:28557">
    <property type="gene designation" value="KLHDC8B"/>
</dbReference>
<dbReference type="HPA" id="ENSG00000185909">
    <property type="expression patterns" value="Tissue enhanced (adrenal)"/>
</dbReference>
<dbReference type="MalaCards" id="KLHDC8B"/>
<dbReference type="MIM" id="236000">
    <property type="type" value="phenotype"/>
</dbReference>
<dbReference type="MIM" id="613169">
    <property type="type" value="gene"/>
</dbReference>
<dbReference type="neXtProt" id="NX_Q8IXV7"/>
<dbReference type="OpenTargets" id="ENSG00000185909"/>
<dbReference type="Orphanet" id="98843">
    <property type="disease" value="Classic Hodgkin lymphoma, nodular sclerosis type"/>
</dbReference>
<dbReference type="PharmGKB" id="PA142671584"/>
<dbReference type="VEuPathDB" id="HostDB:ENSG00000185909"/>
<dbReference type="eggNOG" id="KOG1072">
    <property type="taxonomic scope" value="Eukaryota"/>
</dbReference>
<dbReference type="GeneTree" id="ENSGT00940000160815"/>
<dbReference type="HOGENOM" id="CLU_046864_0_0_1"/>
<dbReference type="InParanoid" id="Q8IXV7"/>
<dbReference type="OMA" id="VWIKPSR"/>
<dbReference type="OrthoDB" id="45365at2759"/>
<dbReference type="PAN-GO" id="Q8IXV7">
    <property type="GO annotations" value="6 GO annotations based on evolutionary models"/>
</dbReference>
<dbReference type="PhylomeDB" id="Q8IXV7"/>
<dbReference type="PathwayCommons" id="Q8IXV7"/>
<dbReference type="SignaLink" id="Q8IXV7"/>
<dbReference type="BioGRID-ORCS" id="200942">
    <property type="hits" value="11 hits in 1155 CRISPR screens"/>
</dbReference>
<dbReference type="GenomeRNAi" id="200942"/>
<dbReference type="Pharos" id="Q8IXV7">
    <property type="development level" value="Tbio"/>
</dbReference>
<dbReference type="PRO" id="PR:Q8IXV7"/>
<dbReference type="Proteomes" id="UP000005640">
    <property type="component" value="Chromosome 3"/>
</dbReference>
<dbReference type="RNAct" id="Q8IXV7">
    <property type="molecule type" value="protein"/>
</dbReference>
<dbReference type="Bgee" id="ENSG00000185909">
    <property type="expression patterns" value="Expressed in right adrenal gland cortex and 178 other cell types or tissues"/>
</dbReference>
<dbReference type="GO" id="GO:0110070">
    <property type="term" value="C:cellularization cleavage furrow"/>
    <property type="evidence" value="ECO:0000314"/>
    <property type="project" value="UniProtKB"/>
</dbReference>
<dbReference type="GO" id="GO:0005737">
    <property type="term" value="C:cytoplasm"/>
    <property type="evidence" value="ECO:0000314"/>
    <property type="project" value="UniProtKB"/>
</dbReference>
<dbReference type="GO" id="GO:0005829">
    <property type="term" value="C:cytosol"/>
    <property type="evidence" value="ECO:0000314"/>
    <property type="project" value="HPA"/>
</dbReference>
<dbReference type="GO" id="GO:0045171">
    <property type="term" value="C:intercellular bridge"/>
    <property type="evidence" value="ECO:0000314"/>
    <property type="project" value="UniProtKB"/>
</dbReference>
<dbReference type="GO" id="GO:0030496">
    <property type="term" value="C:midbody"/>
    <property type="evidence" value="ECO:0000314"/>
    <property type="project" value="UniProtKB"/>
</dbReference>
<dbReference type="GO" id="GO:1902410">
    <property type="term" value="P:mitotic cytokinetic process"/>
    <property type="evidence" value="ECO:0000315"/>
    <property type="project" value="UniProtKB"/>
</dbReference>
<dbReference type="GO" id="GO:0140014">
    <property type="term" value="P:mitotic nuclear division"/>
    <property type="evidence" value="ECO:0000315"/>
    <property type="project" value="UniProtKB"/>
</dbReference>
<dbReference type="GO" id="GO:0098813">
    <property type="term" value="P:nuclear chromosome segregation"/>
    <property type="evidence" value="ECO:0000315"/>
    <property type="project" value="UniProtKB"/>
</dbReference>
<dbReference type="FunFam" id="2.120.10.80:FF:000053">
    <property type="entry name" value="Kelch domain-containing protein 8B"/>
    <property type="match status" value="1"/>
</dbReference>
<dbReference type="FunFam" id="2.120.10.80:FF:000066">
    <property type="entry name" value="Kelch domain-containing protein 8B"/>
    <property type="match status" value="1"/>
</dbReference>
<dbReference type="Gene3D" id="2.120.10.80">
    <property type="entry name" value="Kelch-type beta propeller"/>
    <property type="match status" value="2"/>
</dbReference>
<dbReference type="InterPro" id="IPR015915">
    <property type="entry name" value="Kelch-typ_b-propeller"/>
</dbReference>
<dbReference type="InterPro" id="IPR006652">
    <property type="entry name" value="Kelch_1"/>
</dbReference>
<dbReference type="InterPro" id="IPR051746">
    <property type="entry name" value="Kelch_domain_containing_8"/>
</dbReference>
<dbReference type="PANTHER" id="PTHR46260:SF2">
    <property type="entry name" value="KELCH DOMAIN-CONTAINING PROTEIN 8B"/>
    <property type="match status" value="1"/>
</dbReference>
<dbReference type="PANTHER" id="PTHR46260">
    <property type="entry name" value="RING-TYPE DOMAIN-CONTAINING PROTEIN"/>
    <property type="match status" value="1"/>
</dbReference>
<dbReference type="Pfam" id="PF01344">
    <property type="entry name" value="Kelch_1"/>
    <property type="match status" value="2"/>
</dbReference>
<dbReference type="Pfam" id="PF24681">
    <property type="entry name" value="Kelch_KLHDC2_KLHL20_DRC7"/>
    <property type="match status" value="1"/>
</dbReference>
<dbReference type="SMART" id="SM00612">
    <property type="entry name" value="Kelch"/>
    <property type="match status" value="6"/>
</dbReference>
<dbReference type="SUPFAM" id="SSF117281">
    <property type="entry name" value="Kelch motif"/>
    <property type="match status" value="2"/>
</dbReference>
<protein>
    <recommendedName>
        <fullName evidence="5">Kelch domain-containing protein 8B</fullName>
    </recommendedName>
</protein>